<gene>
    <name evidence="1" type="primary">lpxH</name>
    <name type="ordered locus">WIGBR2440</name>
</gene>
<evidence type="ECO:0000255" key="1">
    <source>
        <dbReference type="HAMAP-Rule" id="MF_00575"/>
    </source>
</evidence>
<dbReference type="EC" id="3.6.1.54" evidence="1"/>
<dbReference type="EMBL" id="BA000021">
    <property type="protein sequence ID" value="BAC24390.1"/>
    <property type="molecule type" value="Genomic_DNA"/>
</dbReference>
<dbReference type="SMR" id="Q8D2V8"/>
<dbReference type="STRING" id="36870.gene:10368737"/>
<dbReference type="KEGG" id="wbr:ybbF"/>
<dbReference type="eggNOG" id="COG2908">
    <property type="taxonomic scope" value="Bacteria"/>
</dbReference>
<dbReference type="HOGENOM" id="CLU_074586_0_0_6"/>
<dbReference type="OrthoDB" id="9783283at2"/>
<dbReference type="UniPathway" id="UPA00359">
    <property type="reaction ID" value="UER00480"/>
</dbReference>
<dbReference type="Proteomes" id="UP000000562">
    <property type="component" value="Chromosome"/>
</dbReference>
<dbReference type="GO" id="GO:0005737">
    <property type="term" value="C:cytoplasm"/>
    <property type="evidence" value="ECO:0007669"/>
    <property type="project" value="InterPro"/>
</dbReference>
<dbReference type="GO" id="GO:0019897">
    <property type="term" value="C:extrinsic component of plasma membrane"/>
    <property type="evidence" value="ECO:0007669"/>
    <property type="project" value="UniProtKB-UniRule"/>
</dbReference>
<dbReference type="GO" id="GO:0030145">
    <property type="term" value="F:manganese ion binding"/>
    <property type="evidence" value="ECO:0007669"/>
    <property type="project" value="UniProtKB-UniRule"/>
</dbReference>
<dbReference type="GO" id="GO:0008758">
    <property type="term" value="F:UDP-2,3-diacylglucosamine hydrolase activity"/>
    <property type="evidence" value="ECO:0007669"/>
    <property type="project" value="UniProtKB-UniRule"/>
</dbReference>
<dbReference type="GO" id="GO:0009245">
    <property type="term" value="P:lipid A biosynthetic process"/>
    <property type="evidence" value="ECO:0007669"/>
    <property type="project" value="UniProtKB-UniRule"/>
</dbReference>
<dbReference type="CDD" id="cd07398">
    <property type="entry name" value="MPP_YbbF-LpxH"/>
    <property type="match status" value="1"/>
</dbReference>
<dbReference type="Gene3D" id="3.60.21.10">
    <property type="match status" value="1"/>
</dbReference>
<dbReference type="HAMAP" id="MF_00575">
    <property type="entry name" value="LpxH"/>
    <property type="match status" value="1"/>
</dbReference>
<dbReference type="InterPro" id="IPR004843">
    <property type="entry name" value="Calcineurin-like_PHP_ApaH"/>
</dbReference>
<dbReference type="InterPro" id="IPR043461">
    <property type="entry name" value="LpxH-like"/>
</dbReference>
<dbReference type="InterPro" id="IPR029052">
    <property type="entry name" value="Metallo-depent_PP-like"/>
</dbReference>
<dbReference type="InterPro" id="IPR010138">
    <property type="entry name" value="UDP-diacylglucosamine_Hdrlase"/>
</dbReference>
<dbReference type="NCBIfam" id="TIGR01854">
    <property type="entry name" value="lipid_A_lpxH"/>
    <property type="match status" value="1"/>
</dbReference>
<dbReference type="NCBIfam" id="NF003743">
    <property type="entry name" value="PRK05340.1"/>
    <property type="match status" value="1"/>
</dbReference>
<dbReference type="PANTHER" id="PTHR34990:SF1">
    <property type="entry name" value="UDP-2,3-DIACYLGLUCOSAMINE HYDROLASE"/>
    <property type="match status" value="1"/>
</dbReference>
<dbReference type="PANTHER" id="PTHR34990">
    <property type="entry name" value="UDP-2,3-DIACYLGLUCOSAMINE HYDROLASE-RELATED"/>
    <property type="match status" value="1"/>
</dbReference>
<dbReference type="Pfam" id="PF00149">
    <property type="entry name" value="Metallophos"/>
    <property type="match status" value="1"/>
</dbReference>
<dbReference type="SUPFAM" id="SSF56300">
    <property type="entry name" value="Metallo-dependent phosphatases"/>
    <property type="match status" value="1"/>
</dbReference>
<name>LPXH_WIGBR</name>
<comment type="function">
    <text evidence="1">Hydrolyzes the pyrophosphate bond of UDP-2,3-diacylglucosamine to yield 2,3-diacylglucosamine 1-phosphate (lipid X) and UMP by catalyzing the attack of water at the alpha-P atom. Involved in the biosynthesis of lipid A, a phosphorylated glycolipid that anchors the lipopolysaccharide to the outer membrane of the cell.</text>
</comment>
<comment type="catalytic activity">
    <reaction evidence="1">
        <text>UDP-2-N,3-O-bis[(3R)-3-hydroxytetradecanoyl]-alpha-D-glucosamine + H2O = 2-N,3-O-bis[(3R)-3-hydroxytetradecanoyl]-alpha-D-glucosaminyl 1-phosphate + UMP + 2 H(+)</text>
        <dbReference type="Rhea" id="RHEA:25213"/>
        <dbReference type="ChEBI" id="CHEBI:15377"/>
        <dbReference type="ChEBI" id="CHEBI:15378"/>
        <dbReference type="ChEBI" id="CHEBI:57865"/>
        <dbReference type="ChEBI" id="CHEBI:57957"/>
        <dbReference type="ChEBI" id="CHEBI:78847"/>
        <dbReference type="EC" id="3.6.1.54"/>
    </reaction>
</comment>
<comment type="cofactor">
    <cofactor evidence="1">
        <name>Mn(2+)</name>
        <dbReference type="ChEBI" id="CHEBI:29035"/>
    </cofactor>
    <text evidence="1">Binds 2 Mn(2+) ions per subunit in a binuclear metal center.</text>
</comment>
<comment type="pathway">
    <text evidence="1">Glycolipid biosynthesis; lipid IV(A) biosynthesis; lipid IV(A) from (3R)-3-hydroxytetradecanoyl-[acyl-carrier-protein] and UDP-N-acetyl-alpha-D-glucosamine: step 4/6.</text>
</comment>
<comment type="subcellular location">
    <subcellularLocation>
        <location evidence="1">Cell inner membrane</location>
        <topology evidence="1">Peripheral membrane protein</topology>
        <orientation evidence="1">Cytoplasmic side</orientation>
    </subcellularLocation>
</comment>
<comment type="similarity">
    <text evidence="1">Belongs to the LpxH family.</text>
</comment>
<proteinExistence type="inferred from homology"/>
<feature type="chain" id="PRO_0000214129" description="UDP-2,3-diacylglucosamine hydrolase">
    <location>
        <begin position="1"/>
        <end position="248"/>
    </location>
</feature>
<feature type="binding site" evidence="1">
    <location>
        <position position="8"/>
    </location>
    <ligand>
        <name>Mn(2+)</name>
        <dbReference type="ChEBI" id="CHEBI:29035"/>
        <label>1</label>
    </ligand>
</feature>
<feature type="binding site" evidence="1">
    <location>
        <position position="10"/>
    </location>
    <ligand>
        <name>Mn(2+)</name>
        <dbReference type="ChEBI" id="CHEBI:29035"/>
        <label>1</label>
    </ligand>
</feature>
<feature type="binding site" evidence="1">
    <location>
        <position position="41"/>
    </location>
    <ligand>
        <name>Mn(2+)</name>
        <dbReference type="ChEBI" id="CHEBI:29035"/>
        <label>1</label>
    </ligand>
</feature>
<feature type="binding site" evidence="1">
    <location>
        <position position="41"/>
    </location>
    <ligand>
        <name>Mn(2+)</name>
        <dbReference type="ChEBI" id="CHEBI:29035"/>
        <label>2</label>
    </ligand>
</feature>
<feature type="binding site" evidence="1">
    <location>
        <begin position="79"/>
        <end position="80"/>
    </location>
    <ligand>
        <name>substrate</name>
    </ligand>
</feature>
<feature type="binding site" evidence="1">
    <location>
        <position position="79"/>
    </location>
    <ligand>
        <name>Mn(2+)</name>
        <dbReference type="ChEBI" id="CHEBI:29035"/>
        <label>2</label>
    </ligand>
</feature>
<feature type="binding site" evidence="1">
    <location>
        <position position="114"/>
    </location>
    <ligand>
        <name>Mn(2+)</name>
        <dbReference type="ChEBI" id="CHEBI:29035"/>
        <label>2</label>
    </ligand>
</feature>
<feature type="binding site" evidence="1">
    <location>
        <position position="122"/>
    </location>
    <ligand>
        <name>substrate</name>
    </ligand>
</feature>
<feature type="binding site" evidence="1">
    <location>
        <position position="164"/>
    </location>
    <ligand>
        <name>substrate</name>
    </ligand>
</feature>
<feature type="binding site" evidence="1">
    <location>
        <position position="167"/>
    </location>
    <ligand>
        <name>substrate</name>
    </ligand>
</feature>
<feature type="binding site" evidence="1">
    <location>
        <position position="195"/>
    </location>
    <ligand>
        <name>Mn(2+)</name>
        <dbReference type="ChEBI" id="CHEBI:29035"/>
        <label>2</label>
    </ligand>
</feature>
<feature type="binding site" evidence="1">
    <location>
        <position position="195"/>
    </location>
    <ligand>
        <name>substrate</name>
    </ligand>
</feature>
<feature type="binding site" evidence="1">
    <location>
        <position position="197"/>
    </location>
    <ligand>
        <name>Mn(2+)</name>
        <dbReference type="ChEBI" id="CHEBI:29035"/>
        <label>1</label>
    </ligand>
</feature>
<accession>Q8D2V8</accession>
<organism>
    <name type="scientific">Wigglesworthia glossinidia brevipalpis</name>
    <dbReference type="NCBI Taxonomy" id="36870"/>
    <lineage>
        <taxon>Bacteria</taxon>
        <taxon>Pseudomonadati</taxon>
        <taxon>Pseudomonadota</taxon>
        <taxon>Gammaproteobacteria</taxon>
        <taxon>Enterobacterales</taxon>
        <taxon>Erwiniaceae</taxon>
        <taxon>Wigglesworthia</taxon>
    </lineage>
</organism>
<keyword id="KW-0997">Cell inner membrane</keyword>
<keyword id="KW-1003">Cell membrane</keyword>
<keyword id="KW-0378">Hydrolase</keyword>
<keyword id="KW-0441">Lipid A biosynthesis</keyword>
<keyword id="KW-0444">Lipid biosynthesis</keyword>
<keyword id="KW-0443">Lipid metabolism</keyword>
<keyword id="KW-0464">Manganese</keyword>
<keyword id="KW-0472">Membrane</keyword>
<keyword id="KW-0479">Metal-binding</keyword>
<keyword id="KW-1185">Reference proteome</keyword>
<protein>
    <recommendedName>
        <fullName evidence="1">UDP-2,3-diacylglucosamine hydrolase</fullName>
        <ecNumber evidence="1">3.6.1.54</ecNumber>
    </recommendedName>
    <alternativeName>
        <fullName evidence="1">UDP-2,3-diacylglucosamine diphosphatase</fullName>
    </alternativeName>
</protein>
<reference key="1">
    <citation type="journal article" date="2002" name="Nat. Genet.">
        <title>Genome sequence of the endocellular obligate symbiont of tsetse flies, Wigglesworthia glossinidia.</title>
        <authorList>
            <person name="Akman L."/>
            <person name="Yamashita A."/>
            <person name="Watanabe H."/>
            <person name="Oshima K."/>
            <person name="Shiba T."/>
            <person name="Hattori M."/>
            <person name="Aksoy S."/>
        </authorList>
    </citation>
    <scope>NUCLEOTIDE SEQUENCE [LARGE SCALE GENOMIC DNA]</scope>
</reference>
<sequence>MSTLFVSDVHLSEKNPKLTDLFFYFLKNKAILSRSLYILGDLFETWVGDDNITYISKELANITNYLADNGTSCYFIKGNRDFLIGKSYFKSSKITLLPYKKIININKQSIIILHGDTLCLNDKNYQKFKKLVNQDWLQKFFLKLPLCARIKISNLIINKRKKLNLKRMNYLTKINKEYIKKIMEQTNTNIMIHGHIHMPKVHVLPNRKYRIVLGMWNKSGSILEINKKLSLIKFSKLYCSYTSYPLKY</sequence>